<organism>
    <name type="scientific">Oryza sativa subsp. japonica</name>
    <name type="common">Rice</name>
    <dbReference type="NCBI Taxonomy" id="39947"/>
    <lineage>
        <taxon>Eukaryota</taxon>
        <taxon>Viridiplantae</taxon>
        <taxon>Streptophyta</taxon>
        <taxon>Embryophyta</taxon>
        <taxon>Tracheophyta</taxon>
        <taxon>Spermatophyta</taxon>
        <taxon>Magnoliopsida</taxon>
        <taxon>Liliopsida</taxon>
        <taxon>Poales</taxon>
        <taxon>Poaceae</taxon>
        <taxon>BOP clade</taxon>
        <taxon>Oryzoideae</taxon>
        <taxon>Oryzeae</taxon>
        <taxon>Oryzinae</taxon>
        <taxon>Oryza</taxon>
        <taxon>Oryza sativa</taxon>
    </lineage>
</organism>
<evidence type="ECO:0000250" key="1"/>
<evidence type="ECO:0000255" key="2">
    <source>
        <dbReference type="PROSITE-ProRule" id="PRU00856"/>
    </source>
</evidence>
<evidence type="ECO:0000256" key="3">
    <source>
        <dbReference type="SAM" id="MobiDB-lite"/>
    </source>
</evidence>
<evidence type="ECO:0000305" key="4"/>
<feature type="chain" id="PRO_0000426043" description="Zinc-finger homeodomain protein 6">
    <location>
        <begin position="1"/>
        <end position="255"/>
    </location>
</feature>
<feature type="zinc finger region" description="ZF-HD dimerization-type; degenerate" evidence="2">
    <location>
        <begin position="45"/>
        <end position="93"/>
    </location>
</feature>
<feature type="DNA-binding region" description="Homeobox">
    <location>
        <begin position="172"/>
        <end position="235"/>
    </location>
</feature>
<feature type="region of interest" description="Disordered" evidence="3">
    <location>
        <begin position="1"/>
        <end position="35"/>
    </location>
</feature>
<feature type="region of interest" description="Disordered" evidence="3">
    <location>
        <begin position="106"/>
        <end position="181"/>
    </location>
</feature>
<feature type="region of interest" description="Disordered" evidence="3">
    <location>
        <begin position="226"/>
        <end position="255"/>
    </location>
</feature>
<feature type="compositionally biased region" description="Low complexity" evidence="3">
    <location>
        <begin position="21"/>
        <end position="35"/>
    </location>
</feature>
<feature type="compositionally biased region" description="Pro residues" evidence="3">
    <location>
        <begin position="106"/>
        <end position="126"/>
    </location>
</feature>
<feature type="compositionally biased region" description="Low complexity" evidence="3">
    <location>
        <begin position="139"/>
        <end position="153"/>
    </location>
</feature>
<feature type="compositionally biased region" description="Low complexity" evidence="3">
    <location>
        <begin position="240"/>
        <end position="255"/>
    </location>
</feature>
<feature type="site" description="Required for DNA-binding" evidence="1">
    <location>
        <position position="224"/>
    </location>
</feature>
<sequence>MEFRGHDEPVDEMGVAYGRTPPSSSSSPAASASAGNGAGAAEVRYHECLRNHAAAMGGHVVDGCREFMPMPGDAADALKCAACGCHRSFHRKDDGQQQQQLRLLIPSPPTPRVPLLMPPPQPQPHPHPQHPYLHPPFPYHHTPSGSGGTTTESSSEERGPPSSSAAAAQGRRKRFRTKFTPEQKEQMLAFAERVGWRMQKQDEALVEQFCAQVGVRRQVFKVWMHNNKSSIGSSSGGGSRRQPQEQQSQQQQQQQ</sequence>
<name>ZHD6_ORYSJ</name>
<protein>
    <recommendedName>
        <fullName>Zinc-finger homeodomain protein 6</fullName>
        <shortName>OsZHD6</shortName>
    </recommendedName>
</protein>
<dbReference type="EMBL" id="AC007858">
    <property type="protein sequence ID" value="AAD39591.1"/>
    <property type="status" value="ALT_SEQ"/>
    <property type="molecule type" value="Genomic_DNA"/>
</dbReference>
<dbReference type="EMBL" id="AC120988">
    <property type="protein sequence ID" value="AAU10695.1"/>
    <property type="molecule type" value="Genomic_DNA"/>
</dbReference>
<dbReference type="EMBL" id="AP008211">
    <property type="protein sequence ID" value="BAF18333.1"/>
    <property type="molecule type" value="Genomic_DNA"/>
</dbReference>
<dbReference type="EMBL" id="AP014961">
    <property type="protein sequence ID" value="BAS95507.1"/>
    <property type="molecule type" value="Genomic_DNA"/>
</dbReference>
<dbReference type="EMBL" id="CM000142">
    <property type="protein sequence ID" value="EEE64811.1"/>
    <property type="molecule type" value="Genomic_DNA"/>
</dbReference>
<dbReference type="EMBL" id="AK111350">
    <property type="protein sequence ID" value="BAG99227.1"/>
    <property type="molecule type" value="mRNA"/>
</dbReference>
<dbReference type="RefSeq" id="XP_015639557.1">
    <property type="nucleotide sequence ID" value="XM_015784071.1"/>
</dbReference>
<dbReference type="SMR" id="Q688U3"/>
<dbReference type="FunCoup" id="Q688U3">
    <property type="interactions" value="16"/>
</dbReference>
<dbReference type="STRING" id="39947.Q688U3"/>
<dbReference type="PaxDb" id="39947-Q688U3"/>
<dbReference type="EnsemblPlants" id="Os05t0579300-01">
    <property type="protein sequence ID" value="Os05t0579300-01"/>
    <property type="gene ID" value="Os05g0579300"/>
</dbReference>
<dbReference type="Gramene" id="Os05t0579300-01">
    <property type="protein sequence ID" value="Os05t0579300-01"/>
    <property type="gene ID" value="Os05g0579300"/>
</dbReference>
<dbReference type="KEGG" id="dosa:Os05g0579300"/>
<dbReference type="eggNOG" id="ENOG502QZSB">
    <property type="taxonomic scope" value="Eukaryota"/>
</dbReference>
<dbReference type="HOGENOM" id="CLU_039237_3_1_1"/>
<dbReference type="InParanoid" id="Q688U3"/>
<dbReference type="OMA" id="VEQFCAQ"/>
<dbReference type="OrthoDB" id="636896at2759"/>
<dbReference type="Proteomes" id="UP000000763">
    <property type="component" value="Chromosome 5"/>
</dbReference>
<dbReference type="Proteomes" id="UP000007752">
    <property type="component" value="Chromosome 5"/>
</dbReference>
<dbReference type="Proteomes" id="UP000059680">
    <property type="component" value="Chromosome 5"/>
</dbReference>
<dbReference type="GO" id="GO:0005634">
    <property type="term" value="C:nucleus"/>
    <property type="evidence" value="ECO:0000318"/>
    <property type="project" value="GO_Central"/>
</dbReference>
<dbReference type="GO" id="GO:0003700">
    <property type="term" value="F:DNA-binding transcription factor activity"/>
    <property type="evidence" value="ECO:0000318"/>
    <property type="project" value="GO_Central"/>
</dbReference>
<dbReference type="GO" id="GO:0000976">
    <property type="term" value="F:transcription cis-regulatory region binding"/>
    <property type="evidence" value="ECO:0000318"/>
    <property type="project" value="GO_Central"/>
</dbReference>
<dbReference type="GO" id="GO:0008270">
    <property type="term" value="F:zinc ion binding"/>
    <property type="evidence" value="ECO:0007669"/>
    <property type="project" value="UniProtKB-KW"/>
</dbReference>
<dbReference type="GO" id="GO:0006355">
    <property type="term" value="P:regulation of DNA-templated transcription"/>
    <property type="evidence" value="ECO:0000318"/>
    <property type="project" value="GO_Central"/>
</dbReference>
<dbReference type="FunFam" id="1.10.10.60:FF:000257">
    <property type="entry name" value="Zinc-finger homeodomain protein 2"/>
    <property type="match status" value="1"/>
</dbReference>
<dbReference type="Gene3D" id="1.10.10.60">
    <property type="entry name" value="Homeodomain-like"/>
    <property type="match status" value="1"/>
</dbReference>
<dbReference type="InterPro" id="IPR009057">
    <property type="entry name" value="Homeodomain-like_sf"/>
</dbReference>
<dbReference type="InterPro" id="IPR006455">
    <property type="entry name" value="Homeodomain_ZF_HD"/>
</dbReference>
<dbReference type="InterPro" id="IPR006456">
    <property type="entry name" value="ZF_HD_homeobox_Cys/His_dimer"/>
</dbReference>
<dbReference type="NCBIfam" id="TIGR01565">
    <property type="entry name" value="homeo_ZF_HD"/>
    <property type="match status" value="1"/>
</dbReference>
<dbReference type="NCBIfam" id="TIGR01566">
    <property type="entry name" value="ZF_HD_prot_N"/>
    <property type="match status" value="1"/>
</dbReference>
<dbReference type="PANTHER" id="PTHR31948">
    <property type="entry name" value="ZINC-FINGER HOMEODOMAIN PROTEIN 2"/>
    <property type="match status" value="1"/>
</dbReference>
<dbReference type="PANTHER" id="PTHR31948:SF167">
    <property type="entry name" value="ZINC-FINGER HOMEODOMAIN PROTEIN 6"/>
    <property type="match status" value="1"/>
</dbReference>
<dbReference type="Pfam" id="PF04770">
    <property type="entry name" value="ZF-HD_dimer"/>
    <property type="match status" value="1"/>
</dbReference>
<dbReference type="SUPFAM" id="SSF46689">
    <property type="entry name" value="Homeodomain-like"/>
    <property type="match status" value="1"/>
</dbReference>
<dbReference type="PROSITE" id="PS51523">
    <property type="entry name" value="ZF_HD_DIMER"/>
    <property type="match status" value="1"/>
</dbReference>
<keyword id="KW-0238">DNA-binding</keyword>
<keyword id="KW-0371">Homeobox</keyword>
<keyword id="KW-0479">Metal-binding</keyword>
<keyword id="KW-0539">Nucleus</keyword>
<keyword id="KW-1185">Reference proteome</keyword>
<keyword id="KW-0804">Transcription</keyword>
<keyword id="KW-0805">Transcription regulation</keyword>
<keyword id="KW-0862">Zinc</keyword>
<keyword id="KW-0863">Zinc-finger</keyword>
<accession>Q688U3</accession>
<accession>A0A0P0WRB1</accession>
<accession>Q9XHW0</accession>
<gene>
    <name type="primary">ZHD6</name>
    <name type="ordered locus">Os05g0579300</name>
    <name type="ordered locus">LOC_Os05g50310</name>
    <name type="ORF">10A19I.6</name>
    <name type="ORF">OsJ_19667</name>
    <name type="ORF">OSJNBa0017N18.8</name>
</gene>
<proteinExistence type="evidence at transcript level"/>
<comment type="function">
    <text evidence="1">Putative transcription factor.</text>
</comment>
<comment type="subunit">
    <text evidence="1">Homo- and heterodimer with other ZFHD proteins.</text>
</comment>
<comment type="subcellular location">
    <subcellularLocation>
        <location evidence="1">Nucleus</location>
    </subcellularLocation>
</comment>
<comment type="domain">
    <text>The homeodomain differs form the typical one by having namely 4 instead of 3 extra amino acids inserted in the loop between helix 1 and helix 2.</text>
</comment>
<comment type="sequence caution" evidence="4">
    <conflict type="erroneous gene model prediction">
        <sequence resource="EMBL-CDS" id="AAD39591"/>
    </conflict>
</comment>
<reference key="1">
    <citation type="journal article" date="2005" name="Mol. Genet. Genomics">
        <title>A fine physical map of the rice chromosome 5.</title>
        <authorList>
            <person name="Cheng C.-H."/>
            <person name="Chung M.C."/>
            <person name="Liu S.-M."/>
            <person name="Chen S.-K."/>
            <person name="Kao F.Y."/>
            <person name="Lin S.-J."/>
            <person name="Hsiao S.-H."/>
            <person name="Tseng I.C."/>
            <person name="Hsing Y.-I.C."/>
            <person name="Wu H.-P."/>
            <person name="Chen C.-S."/>
            <person name="Shaw J.-F."/>
            <person name="Wu J."/>
            <person name="Matsumoto T."/>
            <person name="Sasaki T."/>
            <person name="Chen H.-C."/>
            <person name="Chow T.-Y."/>
        </authorList>
    </citation>
    <scope>NUCLEOTIDE SEQUENCE [LARGE SCALE GENOMIC DNA]</scope>
    <source>
        <strain>cv. Nipponbare</strain>
    </source>
</reference>
<reference key="2">
    <citation type="journal article" date="2005" name="Nature">
        <title>The map-based sequence of the rice genome.</title>
        <authorList>
            <consortium name="International rice genome sequencing project (IRGSP)"/>
        </authorList>
    </citation>
    <scope>NUCLEOTIDE SEQUENCE [LARGE SCALE GENOMIC DNA]</scope>
    <source>
        <strain>cv. Nipponbare</strain>
    </source>
</reference>
<reference key="3">
    <citation type="journal article" date="2008" name="Nucleic Acids Res.">
        <title>The rice annotation project database (RAP-DB): 2008 update.</title>
        <authorList>
            <consortium name="The rice annotation project (RAP)"/>
        </authorList>
    </citation>
    <scope>GENOME REANNOTATION</scope>
    <source>
        <strain>cv. Nipponbare</strain>
    </source>
</reference>
<reference key="4">
    <citation type="journal article" date="2013" name="Rice">
        <title>Improvement of the Oryza sativa Nipponbare reference genome using next generation sequence and optical map data.</title>
        <authorList>
            <person name="Kawahara Y."/>
            <person name="de la Bastide M."/>
            <person name="Hamilton J.P."/>
            <person name="Kanamori H."/>
            <person name="McCombie W.R."/>
            <person name="Ouyang S."/>
            <person name="Schwartz D.C."/>
            <person name="Tanaka T."/>
            <person name="Wu J."/>
            <person name="Zhou S."/>
            <person name="Childs K.L."/>
            <person name="Davidson R.M."/>
            <person name="Lin H."/>
            <person name="Quesada-Ocampo L."/>
            <person name="Vaillancourt B."/>
            <person name="Sakai H."/>
            <person name="Lee S.S."/>
            <person name="Kim J."/>
            <person name="Numa H."/>
            <person name="Itoh T."/>
            <person name="Buell C.R."/>
            <person name="Matsumoto T."/>
        </authorList>
    </citation>
    <scope>GENOME REANNOTATION</scope>
    <source>
        <strain>cv. Nipponbare</strain>
    </source>
</reference>
<reference key="5">
    <citation type="journal article" date="2005" name="PLoS Biol.">
        <title>The genomes of Oryza sativa: a history of duplications.</title>
        <authorList>
            <person name="Yu J."/>
            <person name="Wang J."/>
            <person name="Lin W."/>
            <person name="Li S."/>
            <person name="Li H."/>
            <person name="Zhou J."/>
            <person name="Ni P."/>
            <person name="Dong W."/>
            <person name="Hu S."/>
            <person name="Zeng C."/>
            <person name="Zhang J."/>
            <person name="Zhang Y."/>
            <person name="Li R."/>
            <person name="Xu Z."/>
            <person name="Li S."/>
            <person name="Li X."/>
            <person name="Zheng H."/>
            <person name="Cong L."/>
            <person name="Lin L."/>
            <person name="Yin J."/>
            <person name="Geng J."/>
            <person name="Li G."/>
            <person name="Shi J."/>
            <person name="Liu J."/>
            <person name="Lv H."/>
            <person name="Li J."/>
            <person name="Wang J."/>
            <person name="Deng Y."/>
            <person name="Ran L."/>
            <person name="Shi X."/>
            <person name="Wang X."/>
            <person name="Wu Q."/>
            <person name="Li C."/>
            <person name="Ren X."/>
            <person name="Wang J."/>
            <person name="Wang X."/>
            <person name="Li D."/>
            <person name="Liu D."/>
            <person name="Zhang X."/>
            <person name="Ji Z."/>
            <person name="Zhao W."/>
            <person name="Sun Y."/>
            <person name="Zhang Z."/>
            <person name="Bao J."/>
            <person name="Han Y."/>
            <person name="Dong L."/>
            <person name="Ji J."/>
            <person name="Chen P."/>
            <person name="Wu S."/>
            <person name="Liu J."/>
            <person name="Xiao Y."/>
            <person name="Bu D."/>
            <person name="Tan J."/>
            <person name="Yang L."/>
            <person name="Ye C."/>
            <person name="Zhang J."/>
            <person name="Xu J."/>
            <person name="Zhou Y."/>
            <person name="Yu Y."/>
            <person name="Zhang B."/>
            <person name="Zhuang S."/>
            <person name="Wei H."/>
            <person name="Liu B."/>
            <person name="Lei M."/>
            <person name="Yu H."/>
            <person name="Li Y."/>
            <person name="Xu H."/>
            <person name="Wei S."/>
            <person name="He X."/>
            <person name="Fang L."/>
            <person name="Zhang Z."/>
            <person name="Zhang Y."/>
            <person name="Huang X."/>
            <person name="Su Z."/>
            <person name="Tong W."/>
            <person name="Li J."/>
            <person name="Tong Z."/>
            <person name="Li S."/>
            <person name="Ye J."/>
            <person name="Wang L."/>
            <person name="Fang L."/>
            <person name="Lei T."/>
            <person name="Chen C.-S."/>
            <person name="Chen H.-C."/>
            <person name="Xu Z."/>
            <person name="Li H."/>
            <person name="Huang H."/>
            <person name="Zhang F."/>
            <person name="Xu H."/>
            <person name="Li N."/>
            <person name="Zhao C."/>
            <person name="Li S."/>
            <person name="Dong L."/>
            <person name="Huang Y."/>
            <person name="Li L."/>
            <person name="Xi Y."/>
            <person name="Qi Q."/>
            <person name="Li W."/>
            <person name="Zhang B."/>
            <person name="Hu W."/>
            <person name="Zhang Y."/>
            <person name="Tian X."/>
            <person name="Jiao Y."/>
            <person name="Liang X."/>
            <person name="Jin J."/>
            <person name="Gao L."/>
            <person name="Zheng W."/>
            <person name="Hao B."/>
            <person name="Liu S.-M."/>
            <person name="Wang W."/>
            <person name="Yuan L."/>
            <person name="Cao M."/>
            <person name="McDermott J."/>
            <person name="Samudrala R."/>
            <person name="Wang J."/>
            <person name="Wong G.K.-S."/>
            <person name="Yang H."/>
        </authorList>
    </citation>
    <scope>NUCLEOTIDE SEQUENCE [LARGE SCALE GENOMIC DNA]</scope>
    <source>
        <strain>cv. Nipponbare</strain>
    </source>
</reference>
<reference key="6">
    <citation type="journal article" date="2003" name="Science">
        <title>Collection, mapping, and annotation of over 28,000 cDNA clones from japonica rice.</title>
        <authorList>
            <consortium name="The rice full-length cDNA consortium"/>
        </authorList>
    </citation>
    <scope>NUCLEOTIDE SEQUENCE [LARGE SCALE MRNA]</scope>
    <source>
        <strain>cv. Nipponbare</strain>
    </source>
</reference>
<reference key="7">
    <citation type="journal article" date="2008" name="J. Integr. Plant Biol.">
        <title>Phylogenetic analysis of the plant-specific zinc finger-homeobox and mini zinc finger gene families.</title>
        <authorList>
            <person name="Hu W."/>
            <person name="dePamphilis C.W."/>
            <person name="Ma H."/>
        </authorList>
    </citation>
    <scope>GENE FAMILY</scope>
    <scope>NOMENCLATURE</scope>
</reference>